<feature type="chain" id="PRO_0000127601" description="Putative cuticle collagen 80">
    <location>
        <begin position="1"/>
        <end position="317"/>
    </location>
</feature>
<feature type="region of interest" description="Disordered" evidence="2">
    <location>
        <begin position="80"/>
        <end position="262"/>
    </location>
</feature>
<feature type="region of interest" description="Triple-helical region">
    <location>
        <begin position="92"/>
        <end position="124"/>
    </location>
</feature>
<feature type="region of interest" description="Triple-helical region">
    <location>
        <begin position="137"/>
        <end position="199"/>
    </location>
</feature>
<feature type="region of interest" description="Triple-helical region">
    <location>
        <begin position="202"/>
        <end position="264"/>
    </location>
</feature>
<feature type="compositionally biased region" description="Low complexity" evidence="2">
    <location>
        <begin position="108"/>
        <end position="124"/>
    </location>
</feature>
<feature type="compositionally biased region" description="Low complexity" evidence="2">
    <location>
        <begin position="135"/>
        <end position="145"/>
    </location>
</feature>
<feature type="compositionally biased region" description="Low complexity" evidence="2">
    <location>
        <begin position="175"/>
        <end position="206"/>
    </location>
</feature>
<feature type="compositionally biased region" description="Pro residues" evidence="2">
    <location>
        <begin position="207"/>
        <end position="219"/>
    </location>
</feature>
<feature type="compositionally biased region" description="Pro residues" evidence="2">
    <location>
        <begin position="230"/>
        <end position="240"/>
    </location>
</feature>
<feature type="compositionally biased region" description="Low complexity" evidence="2">
    <location>
        <begin position="242"/>
        <end position="262"/>
    </location>
</feature>
<sequence length="317" mass="31283">MSTTFLSVMAGLSGIVVFGALISVFHIYTDINSFVDEAHRELGAFRGVANDAWNSMVNHDDSARVARSVFVRRQKKQSQCNCGPQASNCPAGPPGPPGASGDRGLDGQPGPAGKPGQPGVAGPAHHQQQECIKCPQGAPGPAGAPGNPGPQGPNGNPGAPAHGGGQGPPGPPGPAGDAGSPGQAGAPGNPGRPGQSGQRSRGLPGPSGRPGPQGPPGAPGQPGSGSTPGPAGPPGPPGPNGQPGHPGQDGQPGAPGNDGAPGSDAAYCPCPARSAAVFRHRNVAVNRHRAVAKKRVVAKKRVVARKRVVAARRHVQA</sequence>
<evidence type="ECO:0000250" key="1"/>
<evidence type="ECO:0000256" key="2">
    <source>
        <dbReference type="SAM" id="MobiDB-lite"/>
    </source>
</evidence>
<evidence type="ECO:0000305" key="3"/>
<accession>Q09456</accession>
<keyword id="KW-0176">Collagen</keyword>
<keyword id="KW-0193">Cuticle</keyword>
<keyword id="KW-1015">Disulfide bond</keyword>
<keyword id="KW-1185">Reference proteome</keyword>
<keyword id="KW-0677">Repeat</keyword>
<reference key="1">
    <citation type="journal article" date="1998" name="Science">
        <title>Genome sequence of the nematode C. elegans: a platform for investigating biology.</title>
        <authorList>
            <consortium name="The C. elegans sequencing consortium"/>
        </authorList>
    </citation>
    <scope>NUCLEOTIDE SEQUENCE [LARGE SCALE GENOMIC DNA]</scope>
    <source>
        <strain>Bristol N2</strain>
    </source>
</reference>
<comment type="function">
    <text evidence="1">Nematode cuticles are composed largely of collagen-like proteins. The cuticle functions both as an exoskeleton and as a barrier to protect the worm from its environment (By similarity).</text>
</comment>
<comment type="subunit">
    <text evidence="1">Collagen polypeptide chains are complexed within the cuticle by disulfide bonds and other types of covalent cross-links.</text>
</comment>
<comment type="similarity">
    <text evidence="3">Belongs to the cuticular collagen family.</text>
</comment>
<proteinExistence type="inferred from homology"/>
<protein>
    <recommendedName>
        <fullName>Putative cuticle collagen 80</fullName>
    </recommendedName>
</protein>
<name>COL80_CAEEL</name>
<organism>
    <name type="scientific">Caenorhabditis elegans</name>
    <dbReference type="NCBI Taxonomy" id="6239"/>
    <lineage>
        <taxon>Eukaryota</taxon>
        <taxon>Metazoa</taxon>
        <taxon>Ecdysozoa</taxon>
        <taxon>Nematoda</taxon>
        <taxon>Chromadorea</taxon>
        <taxon>Rhabditida</taxon>
        <taxon>Rhabditina</taxon>
        <taxon>Rhabditomorpha</taxon>
        <taxon>Rhabditoidea</taxon>
        <taxon>Rhabditidae</taxon>
        <taxon>Peloderinae</taxon>
        <taxon>Caenorhabditis</taxon>
    </lineage>
</organism>
<dbReference type="EMBL" id="Z46791">
    <property type="protein sequence ID" value="CAA86758.1"/>
    <property type="molecule type" value="Genomic_DNA"/>
</dbReference>
<dbReference type="PIR" id="T19143">
    <property type="entry name" value="T19143"/>
</dbReference>
<dbReference type="RefSeq" id="NP_496310.1">
    <property type="nucleotide sequence ID" value="NM_063909.9"/>
</dbReference>
<dbReference type="BioGRID" id="39966">
    <property type="interactions" value="3"/>
</dbReference>
<dbReference type="DIP" id="DIP-27389N"/>
<dbReference type="STRING" id="6239.C09G5.5.1"/>
<dbReference type="PaxDb" id="6239-C09G5.5"/>
<dbReference type="PeptideAtlas" id="Q09456"/>
<dbReference type="EnsemblMetazoa" id="C09G5.5.1">
    <property type="protein sequence ID" value="C09G5.5.1"/>
    <property type="gene ID" value="WBGene00000656"/>
</dbReference>
<dbReference type="GeneID" id="174652"/>
<dbReference type="KEGG" id="cel:CELE_C09G5.5"/>
<dbReference type="UCSC" id="C09G5.5">
    <property type="organism name" value="c. elegans"/>
</dbReference>
<dbReference type="AGR" id="WB:WBGene00000656"/>
<dbReference type="CTD" id="174652"/>
<dbReference type="WormBase" id="C09G5.5">
    <property type="protein sequence ID" value="CE01485"/>
    <property type="gene ID" value="WBGene00000656"/>
    <property type="gene designation" value="col-80"/>
</dbReference>
<dbReference type="eggNOG" id="KOG3544">
    <property type="taxonomic scope" value="Eukaryota"/>
</dbReference>
<dbReference type="GeneTree" id="ENSGT00970000196071"/>
<dbReference type="HOGENOM" id="CLU_001074_4_3_1"/>
<dbReference type="InParanoid" id="Q09456"/>
<dbReference type="OMA" id="KCEERIT"/>
<dbReference type="OrthoDB" id="5876933at2759"/>
<dbReference type="PRO" id="PR:Q09456"/>
<dbReference type="Proteomes" id="UP000001940">
    <property type="component" value="Chromosome II"/>
</dbReference>
<dbReference type="Bgee" id="WBGene00000656">
    <property type="expression patterns" value="Expressed in adult organism and 3 other cell types or tissues"/>
</dbReference>
<dbReference type="GO" id="GO:0005581">
    <property type="term" value="C:collagen trimer"/>
    <property type="evidence" value="ECO:0007669"/>
    <property type="project" value="UniProtKB-KW"/>
</dbReference>
<dbReference type="GO" id="GO:0042302">
    <property type="term" value="F:structural constituent of cuticle"/>
    <property type="evidence" value="ECO:0007669"/>
    <property type="project" value="UniProtKB-KW"/>
</dbReference>
<dbReference type="InterPro" id="IPR002486">
    <property type="entry name" value="Col_cuticle_N"/>
</dbReference>
<dbReference type="InterPro" id="IPR008160">
    <property type="entry name" value="Collagen"/>
</dbReference>
<dbReference type="PANTHER" id="PTHR24637">
    <property type="entry name" value="COLLAGEN"/>
    <property type="match status" value="1"/>
</dbReference>
<dbReference type="PANTHER" id="PTHR24637:SF260">
    <property type="entry name" value="CUTICLE COLLAGEN 80-RELATED"/>
    <property type="match status" value="1"/>
</dbReference>
<dbReference type="Pfam" id="PF01484">
    <property type="entry name" value="Col_cuticle_N"/>
    <property type="match status" value="1"/>
</dbReference>
<dbReference type="Pfam" id="PF01391">
    <property type="entry name" value="Collagen"/>
    <property type="match status" value="1"/>
</dbReference>
<dbReference type="SMART" id="SM01088">
    <property type="entry name" value="Col_cuticle_N"/>
    <property type="match status" value="1"/>
</dbReference>
<gene>
    <name type="primary">col-80</name>
    <name type="ORF">C09G5.5</name>
</gene>